<feature type="chain" id="PRO_1000017422" description="Large ribosomal subunit protein bL27">
    <location>
        <begin position="1"/>
        <end position="89"/>
    </location>
</feature>
<feature type="region of interest" description="Disordered" evidence="2">
    <location>
        <begin position="1"/>
        <end position="21"/>
    </location>
</feature>
<protein>
    <recommendedName>
        <fullName evidence="1">Large ribosomal subunit protein bL27</fullName>
    </recommendedName>
    <alternativeName>
        <fullName evidence="3">50S ribosomal protein L27</fullName>
    </alternativeName>
</protein>
<keyword id="KW-1185">Reference proteome</keyword>
<keyword id="KW-0687">Ribonucleoprotein</keyword>
<keyword id="KW-0689">Ribosomal protein</keyword>
<evidence type="ECO:0000255" key="1">
    <source>
        <dbReference type="HAMAP-Rule" id="MF_00539"/>
    </source>
</evidence>
<evidence type="ECO:0000256" key="2">
    <source>
        <dbReference type="SAM" id="MobiDB-lite"/>
    </source>
</evidence>
<evidence type="ECO:0000305" key="3"/>
<comment type="similarity">
    <text evidence="1">Belongs to the bacterial ribosomal protein bL27 family.</text>
</comment>
<reference key="1">
    <citation type="journal article" date="2007" name="Science">
        <title>Legumes symbioses: absence of nod genes in photosynthetic bradyrhizobia.</title>
        <authorList>
            <person name="Giraud E."/>
            <person name="Moulin L."/>
            <person name="Vallenet D."/>
            <person name="Barbe V."/>
            <person name="Cytryn E."/>
            <person name="Avarre J.-C."/>
            <person name="Jaubert M."/>
            <person name="Simon D."/>
            <person name="Cartieaux F."/>
            <person name="Prin Y."/>
            <person name="Bena G."/>
            <person name="Hannibal L."/>
            <person name="Fardoux J."/>
            <person name="Kojadinovic M."/>
            <person name="Vuillet L."/>
            <person name="Lajus A."/>
            <person name="Cruveiller S."/>
            <person name="Rouy Z."/>
            <person name="Mangenot S."/>
            <person name="Segurens B."/>
            <person name="Dossat C."/>
            <person name="Franck W.L."/>
            <person name="Chang W.-S."/>
            <person name="Saunders E."/>
            <person name="Bruce D."/>
            <person name="Richardson P."/>
            <person name="Normand P."/>
            <person name="Dreyfus B."/>
            <person name="Pignol D."/>
            <person name="Stacey G."/>
            <person name="Emerich D."/>
            <person name="Vermeglio A."/>
            <person name="Medigue C."/>
            <person name="Sadowsky M."/>
        </authorList>
    </citation>
    <scope>NUCLEOTIDE SEQUENCE [LARGE SCALE GENOMIC DNA]</scope>
    <source>
        <strain>ORS 278</strain>
    </source>
</reference>
<name>RL27_BRASO</name>
<dbReference type="EMBL" id="CU234118">
    <property type="protein sequence ID" value="CAL74382.1"/>
    <property type="molecule type" value="Genomic_DNA"/>
</dbReference>
<dbReference type="RefSeq" id="WP_008961804.1">
    <property type="nucleotide sequence ID" value="NC_009445.1"/>
</dbReference>
<dbReference type="SMR" id="A4YKF6"/>
<dbReference type="STRING" id="114615.BRADO0435"/>
<dbReference type="KEGG" id="bra:BRADO0435"/>
<dbReference type="eggNOG" id="COG0211">
    <property type="taxonomic scope" value="Bacteria"/>
</dbReference>
<dbReference type="HOGENOM" id="CLU_095424_4_1_5"/>
<dbReference type="OrthoDB" id="9803474at2"/>
<dbReference type="Proteomes" id="UP000001994">
    <property type="component" value="Chromosome"/>
</dbReference>
<dbReference type="GO" id="GO:0022625">
    <property type="term" value="C:cytosolic large ribosomal subunit"/>
    <property type="evidence" value="ECO:0007669"/>
    <property type="project" value="TreeGrafter"/>
</dbReference>
<dbReference type="GO" id="GO:0003735">
    <property type="term" value="F:structural constituent of ribosome"/>
    <property type="evidence" value="ECO:0007669"/>
    <property type="project" value="InterPro"/>
</dbReference>
<dbReference type="GO" id="GO:0006412">
    <property type="term" value="P:translation"/>
    <property type="evidence" value="ECO:0007669"/>
    <property type="project" value="UniProtKB-UniRule"/>
</dbReference>
<dbReference type="FunFam" id="2.40.50.100:FF:000020">
    <property type="entry name" value="50S ribosomal protein L27"/>
    <property type="match status" value="1"/>
</dbReference>
<dbReference type="Gene3D" id="2.40.50.100">
    <property type="match status" value="1"/>
</dbReference>
<dbReference type="HAMAP" id="MF_00539">
    <property type="entry name" value="Ribosomal_bL27"/>
    <property type="match status" value="1"/>
</dbReference>
<dbReference type="InterPro" id="IPR001684">
    <property type="entry name" value="Ribosomal_bL27"/>
</dbReference>
<dbReference type="InterPro" id="IPR018261">
    <property type="entry name" value="Ribosomal_bL27_CS"/>
</dbReference>
<dbReference type="NCBIfam" id="TIGR00062">
    <property type="entry name" value="L27"/>
    <property type="match status" value="1"/>
</dbReference>
<dbReference type="PANTHER" id="PTHR15893:SF0">
    <property type="entry name" value="LARGE RIBOSOMAL SUBUNIT PROTEIN BL27M"/>
    <property type="match status" value="1"/>
</dbReference>
<dbReference type="PANTHER" id="PTHR15893">
    <property type="entry name" value="RIBOSOMAL PROTEIN L27"/>
    <property type="match status" value="1"/>
</dbReference>
<dbReference type="Pfam" id="PF01016">
    <property type="entry name" value="Ribosomal_L27"/>
    <property type="match status" value="1"/>
</dbReference>
<dbReference type="PRINTS" id="PR00063">
    <property type="entry name" value="RIBOSOMALL27"/>
</dbReference>
<dbReference type="SUPFAM" id="SSF110324">
    <property type="entry name" value="Ribosomal L27 protein-like"/>
    <property type="match status" value="1"/>
</dbReference>
<dbReference type="PROSITE" id="PS00831">
    <property type="entry name" value="RIBOSOMAL_L27"/>
    <property type="match status" value="1"/>
</dbReference>
<sequence length="89" mass="9564">MAHKKAGGSSRNGRDSKGKRLGIKAFGGERVIPGNIIARQRGTTWHPGLNVGMGTDHTLFAKIEGVVEFHDRANRTFISVRPVAAQAAE</sequence>
<gene>
    <name evidence="1" type="primary">rpmA</name>
    <name type="ordered locus">BRADO0435</name>
</gene>
<proteinExistence type="inferred from homology"/>
<organism>
    <name type="scientific">Bradyrhizobium sp. (strain ORS 278)</name>
    <dbReference type="NCBI Taxonomy" id="114615"/>
    <lineage>
        <taxon>Bacteria</taxon>
        <taxon>Pseudomonadati</taxon>
        <taxon>Pseudomonadota</taxon>
        <taxon>Alphaproteobacteria</taxon>
        <taxon>Hyphomicrobiales</taxon>
        <taxon>Nitrobacteraceae</taxon>
        <taxon>Bradyrhizobium</taxon>
    </lineage>
</organism>
<accession>A4YKF6</accession>